<evidence type="ECO:0000250" key="1">
    <source>
        <dbReference type="UniProtKB" id="P53075"/>
    </source>
</evidence>
<evidence type="ECO:0000255" key="2"/>
<evidence type="ECO:0000256" key="3">
    <source>
        <dbReference type="SAM" id="MobiDB-lite"/>
    </source>
</evidence>
<evidence type="ECO:0000305" key="4"/>
<reference key="1">
    <citation type="journal article" date="2004" name="Nature">
        <title>Genome evolution in yeasts.</title>
        <authorList>
            <person name="Dujon B."/>
            <person name="Sherman D."/>
            <person name="Fischer G."/>
            <person name="Durrens P."/>
            <person name="Casaregola S."/>
            <person name="Lafontaine I."/>
            <person name="de Montigny J."/>
            <person name="Marck C."/>
            <person name="Neuveglise C."/>
            <person name="Talla E."/>
            <person name="Goffard N."/>
            <person name="Frangeul L."/>
            <person name="Aigle M."/>
            <person name="Anthouard V."/>
            <person name="Babour A."/>
            <person name="Barbe V."/>
            <person name="Barnay S."/>
            <person name="Blanchin S."/>
            <person name="Beckerich J.-M."/>
            <person name="Beyne E."/>
            <person name="Bleykasten C."/>
            <person name="Boisrame A."/>
            <person name="Boyer J."/>
            <person name="Cattolico L."/>
            <person name="Confanioleri F."/>
            <person name="de Daruvar A."/>
            <person name="Despons L."/>
            <person name="Fabre E."/>
            <person name="Fairhead C."/>
            <person name="Ferry-Dumazet H."/>
            <person name="Groppi A."/>
            <person name="Hantraye F."/>
            <person name="Hennequin C."/>
            <person name="Jauniaux N."/>
            <person name="Joyet P."/>
            <person name="Kachouri R."/>
            <person name="Kerrest A."/>
            <person name="Koszul R."/>
            <person name="Lemaire M."/>
            <person name="Lesur I."/>
            <person name="Ma L."/>
            <person name="Muller H."/>
            <person name="Nicaud J.-M."/>
            <person name="Nikolski M."/>
            <person name="Oztas S."/>
            <person name="Ozier-Kalogeropoulos O."/>
            <person name="Pellenz S."/>
            <person name="Potier S."/>
            <person name="Richard G.-F."/>
            <person name="Straub M.-L."/>
            <person name="Suleau A."/>
            <person name="Swennen D."/>
            <person name="Tekaia F."/>
            <person name="Wesolowski-Louvel M."/>
            <person name="Westhof E."/>
            <person name="Wirth B."/>
            <person name="Zeniou-Meyer M."/>
            <person name="Zivanovic Y."/>
            <person name="Bolotin-Fukuhara M."/>
            <person name="Thierry A."/>
            <person name="Bouchier C."/>
            <person name="Caudron B."/>
            <person name="Scarpelli C."/>
            <person name="Gaillardin C."/>
            <person name="Weissenbach J."/>
            <person name="Wincker P."/>
            <person name="Souciet J.-L."/>
        </authorList>
    </citation>
    <scope>NUCLEOTIDE SEQUENCE [LARGE SCALE GENOMIC DNA]</scope>
    <source>
        <strain>ATCC 8585 / CBS 2359 / DSM 70799 / NBRC 1267 / NRRL Y-1140 / WM37</strain>
    </source>
</reference>
<dbReference type="EMBL" id="CR382121">
    <property type="protein sequence ID" value="CAH02639.1"/>
    <property type="molecule type" value="Genomic_DNA"/>
</dbReference>
<dbReference type="RefSeq" id="XP_451051.1">
    <property type="nucleotide sequence ID" value="XM_451051.1"/>
</dbReference>
<dbReference type="FunCoup" id="Q6CYD8">
    <property type="interactions" value="27"/>
</dbReference>
<dbReference type="STRING" id="284590.Q6CYD8"/>
<dbReference type="PaxDb" id="284590-Q6CYD8"/>
<dbReference type="KEGG" id="kla:KLLA0_A01177g"/>
<dbReference type="eggNOG" id="ENOG502QT2T">
    <property type="taxonomic scope" value="Eukaryota"/>
</dbReference>
<dbReference type="HOGENOM" id="CLU_023952_1_0_1"/>
<dbReference type="InParanoid" id="Q6CYD8"/>
<dbReference type="Proteomes" id="UP000000598">
    <property type="component" value="Chromosome A"/>
</dbReference>
<dbReference type="GO" id="GO:0005739">
    <property type="term" value="C:mitochondrion"/>
    <property type="evidence" value="ECO:0007669"/>
    <property type="project" value="UniProtKB-SubCell"/>
</dbReference>
<dbReference type="GO" id="GO:1990904">
    <property type="term" value="C:ribonucleoprotein complex"/>
    <property type="evidence" value="ECO:0007669"/>
    <property type="project" value="UniProtKB-KW"/>
</dbReference>
<dbReference type="GO" id="GO:0030435">
    <property type="term" value="P:sporulation resulting in formation of a cellular spore"/>
    <property type="evidence" value="ECO:0007669"/>
    <property type="project" value="UniProtKB-KW"/>
</dbReference>
<accession>Q6CYD8</accession>
<keyword id="KW-0175">Coiled coil</keyword>
<keyword id="KW-0496">Mitochondrion</keyword>
<keyword id="KW-1185">Reference proteome</keyword>
<keyword id="KW-0687">Ribonucleoprotein</keyword>
<keyword id="KW-0732">Signal</keyword>
<keyword id="KW-0749">Sporulation</keyword>
<proteinExistence type="inferred from homology"/>
<feature type="signal peptide" evidence="2">
    <location>
        <begin position="1"/>
        <end position="23"/>
    </location>
</feature>
<feature type="chain" id="PRO_0000408908" description="Outer spore wall assembly protein SHE10">
    <location>
        <begin position="24"/>
        <end position="636"/>
    </location>
</feature>
<feature type="region of interest" description="Disordered" evidence="3">
    <location>
        <begin position="565"/>
        <end position="607"/>
    </location>
</feature>
<feature type="coiled-coil region" evidence="2">
    <location>
        <begin position="433"/>
        <end position="460"/>
    </location>
</feature>
<feature type="coiled-coil region" evidence="2">
    <location>
        <begin position="551"/>
        <end position="584"/>
    </location>
</feature>
<feature type="compositionally biased region" description="Low complexity" evidence="3">
    <location>
        <begin position="579"/>
        <end position="607"/>
    </location>
</feature>
<comment type="function">
    <text evidence="1">Involved in spore wall assembly. May be a component of the mitochondrial RNase MRP (MtMRP), a ribonucleoprotein endoribonuclease involved in the cleaving RNA transcripts to generate primers for DNA replication in mitochondria.</text>
</comment>
<comment type="subunit">
    <text evidence="1">Component of the mitochondria-localized RNase mitochondrial RNA-processing (RNase MRP) composed of one single RNA encoded by the NME1 gene and at least 31 proteins. Absent in the nucleus-localized RNase MRP (NuMRP).</text>
</comment>
<comment type="subcellular location">
    <subcellularLocation>
        <location evidence="1">Mitochondrion</location>
    </subcellularLocation>
</comment>
<comment type="similarity">
    <text evidence="4">Belongs to the SHE10 family.</text>
</comment>
<sequence>MRLVSKLLKALLVLLLAFGSVRYSCDNYTSGELQICKYTAPQHYRAIIGGRFPQVIKYSDSLVAKYETVVVPRVGSAVIHVKDTVEQKVVPSVIRTSRSSLSLVYTKVYPRVVKYAFIAESSLCRWYLQLCHQYTVYVKPVVINLYYKTMIKYPFLEHAIYSVQAQYKIMETHVFKYYNIISYNVQVWNDKYGYGRLSRNKIFIRMKSTVVEHLIIWYRYVNNRCRKMWRENLCPIINKSRERFAYHGGVRPESATTDPDDESIFYEDDDVDEYTETSTIVLTVTQTANSALDLKATPSASGLIVDECDMSMEEMLRNDFMSWKITIENKLSNTMKDFENDINEFAQEKLDHIQPTLADLLKRASNTSQTNFQIITKAIMDVNCTESVDPKTNKTIWFDQNNTQLPKYMTRELMREYFSAAHSQFDALSQEIRAHLRKLADEVNDHVEVLRQENVELFEEWADVMITEWSKNLAYVDVAVNEEKLADLEKEQRKNWKDFMKLKRQVIKTRDTLMEHPVKLDSLQSFVNTVQQSLKTLSHENGEYLYILRSKANLEFQAREALERQQREKEKAESASMKASTEFELSSSSFSSSSPSTASSCTASSTSTASLLAVEKTIALEDLQSYYQNVSSTDSL</sequence>
<name>SHE10_KLULA</name>
<protein>
    <recommendedName>
        <fullName evidence="1">Outer spore wall assembly protein SHE10</fullName>
    </recommendedName>
    <alternativeName>
        <fullName evidence="1">Sensitivity to high expression protein 10</fullName>
    </alternativeName>
</protein>
<gene>
    <name evidence="1" type="primary">SHE10</name>
    <name type="ordered locus">KLLA0A01177g</name>
</gene>
<organism>
    <name type="scientific">Kluyveromyces lactis (strain ATCC 8585 / CBS 2359 / DSM 70799 / NBRC 1267 / NRRL Y-1140 / WM37)</name>
    <name type="common">Yeast</name>
    <name type="synonym">Candida sphaerica</name>
    <dbReference type="NCBI Taxonomy" id="284590"/>
    <lineage>
        <taxon>Eukaryota</taxon>
        <taxon>Fungi</taxon>
        <taxon>Dikarya</taxon>
        <taxon>Ascomycota</taxon>
        <taxon>Saccharomycotina</taxon>
        <taxon>Saccharomycetes</taxon>
        <taxon>Saccharomycetales</taxon>
        <taxon>Saccharomycetaceae</taxon>
        <taxon>Kluyveromyces</taxon>
    </lineage>
</organism>